<protein>
    <recommendedName>
        <fullName>Protein OPG052</fullName>
    </recommendedName>
    <alternativeName>
        <fullName>Protein F8</fullName>
    </alternativeName>
</protein>
<accession>P24360</accession>
<accession>Q76ZW8</accession>
<organismHost>
    <name type="scientific">Bos taurus</name>
    <name type="common">Bovine</name>
    <dbReference type="NCBI Taxonomy" id="9913"/>
</organismHost>
<evidence type="ECO:0000256" key="1">
    <source>
        <dbReference type="SAM" id="MobiDB-lite"/>
    </source>
</evidence>
<evidence type="ECO:0000269" key="2">
    <source>
    </source>
</evidence>
<evidence type="ECO:0000305" key="3"/>
<gene>
    <name type="primary">OPG052</name>
    <name type="ordered locus">VACWR047</name>
    <name type="ORF">F8L</name>
</gene>
<keyword id="KW-0244">Early protein</keyword>
<keyword id="KW-1185">Reference proteome</keyword>
<proteinExistence type="evidence at transcript level"/>
<feature type="chain" id="PRO_0000099489" description="Protein OPG052">
    <location>
        <begin position="1"/>
        <end position="65"/>
    </location>
</feature>
<feature type="region of interest" description="Disordered" evidence="1">
    <location>
        <begin position="1"/>
        <end position="27"/>
    </location>
</feature>
<feature type="compositionally biased region" description="Basic residues" evidence="1">
    <location>
        <begin position="1"/>
        <end position="10"/>
    </location>
</feature>
<feature type="compositionally biased region" description="Basic and acidic residues" evidence="1">
    <location>
        <begin position="11"/>
        <end position="21"/>
    </location>
</feature>
<comment type="induction">
    <text evidence="2">Expressed in the early phase of the viral replicative cycle.</text>
</comment>
<comment type="similarity">
    <text evidence="3">Belongs to the orthopoxvirus OPG052 family.</text>
</comment>
<dbReference type="EMBL" id="M34368">
    <property type="protein sequence ID" value="AAA48240.1"/>
    <property type="molecule type" value="mRNA"/>
</dbReference>
<dbReference type="EMBL" id="AY243312">
    <property type="protein sequence ID" value="AAO89326.1"/>
    <property type="molecule type" value="Genomic_DNA"/>
</dbReference>
<dbReference type="PIR" id="B36213">
    <property type="entry name" value="B36213"/>
</dbReference>
<dbReference type="RefSeq" id="YP_232929.1">
    <property type="nucleotide sequence ID" value="NC_006998.1"/>
</dbReference>
<dbReference type="DIP" id="DIP-2167N"/>
<dbReference type="IntAct" id="P24360">
    <property type="interactions" value="1"/>
</dbReference>
<dbReference type="MINT" id="P24360"/>
<dbReference type="DNASU" id="3707504"/>
<dbReference type="GeneID" id="3707504"/>
<dbReference type="KEGG" id="vg:3707504"/>
<dbReference type="Proteomes" id="UP000000344">
    <property type="component" value="Genome"/>
</dbReference>
<dbReference type="InterPro" id="IPR008726">
    <property type="entry name" value="Poxvirus_F8"/>
</dbReference>
<dbReference type="Pfam" id="PF05886">
    <property type="entry name" value="Orthopox_F8"/>
    <property type="match status" value="1"/>
</dbReference>
<organism>
    <name type="scientific">Vaccinia virus (strain Western Reserve)</name>
    <name type="common">VACV</name>
    <name type="synonym">Vaccinia virus (strain WR)</name>
    <dbReference type="NCBI Taxonomy" id="10254"/>
    <lineage>
        <taxon>Viruses</taxon>
        <taxon>Varidnaviria</taxon>
        <taxon>Bamfordvirae</taxon>
        <taxon>Nucleocytoviricota</taxon>
        <taxon>Pokkesviricetes</taxon>
        <taxon>Chitovirales</taxon>
        <taxon>Poxviridae</taxon>
        <taxon>Chordopoxvirinae</taxon>
        <taxon>Orthopoxvirus</taxon>
        <taxon>Vaccinia virus</taxon>
    </lineage>
</organism>
<sequence>MEGSKRKHDSRRLQQEQEQLRPRTPPSYEEIAKYGHSFNVKRFTNEEMCLKNDYPRIISYNPPPK</sequence>
<reference key="1">
    <citation type="journal article" date="1990" name="Virology">
        <title>The vaccinia virus HindIII F fragment: nucleotide sequence of the left 6.2 kb.</title>
        <authorList>
            <person name="Roseman N.A."/>
            <person name="Slabaugh M.B."/>
        </authorList>
    </citation>
    <scope>NUCLEOTIDE SEQUENCE [MRNA]</scope>
</reference>
<reference key="2">
    <citation type="submission" date="2003-02" db="EMBL/GenBank/DDBJ databases">
        <title>Sequencing of the coding region of Vaccinia-WR to an average 9-fold redundancy and an error rate of 0.16/10kb.</title>
        <authorList>
            <person name="Esposito J.J."/>
            <person name="Frace A.M."/>
            <person name="Sammons S.A."/>
            <person name="Olsen-Rasmussen M."/>
            <person name="Osborne J."/>
            <person name="Wohlhueter R."/>
        </authorList>
    </citation>
    <scope>NUCLEOTIDE SEQUENCE [LARGE SCALE GENOMIC DNA]</scope>
</reference>
<reference key="3">
    <citation type="journal article" date="2015" name="J. Virol.">
        <title>Deciphering poxvirus gene expression by RNA sequencing and ribosome profiling.</title>
        <authorList>
            <person name="Yang Z."/>
            <person name="Cao S."/>
            <person name="Martens C.A."/>
            <person name="Porcella S.F."/>
            <person name="Xie Z."/>
            <person name="Ma M."/>
            <person name="Shen B."/>
            <person name="Moss B."/>
        </authorList>
    </citation>
    <scope>INDUCTION</scope>
</reference>
<name>PG052_VACCW</name>